<feature type="chain" id="PRO_0000113216" description="Aspartate carbamoyltransferase catalytic subunit">
    <location>
        <begin position="1"/>
        <end position="338"/>
    </location>
</feature>
<feature type="binding site" evidence="1">
    <location>
        <position position="59"/>
    </location>
    <ligand>
        <name>carbamoyl phosphate</name>
        <dbReference type="ChEBI" id="CHEBI:58228"/>
    </ligand>
</feature>
<feature type="binding site" evidence="1">
    <location>
        <position position="60"/>
    </location>
    <ligand>
        <name>carbamoyl phosphate</name>
        <dbReference type="ChEBI" id="CHEBI:58228"/>
    </ligand>
</feature>
<feature type="binding site" evidence="1">
    <location>
        <position position="87"/>
    </location>
    <ligand>
        <name>L-aspartate</name>
        <dbReference type="ChEBI" id="CHEBI:29991"/>
    </ligand>
</feature>
<feature type="binding site" evidence="1">
    <location>
        <position position="109"/>
    </location>
    <ligand>
        <name>carbamoyl phosphate</name>
        <dbReference type="ChEBI" id="CHEBI:58228"/>
    </ligand>
</feature>
<feature type="binding site" evidence="1">
    <location>
        <position position="142"/>
    </location>
    <ligand>
        <name>carbamoyl phosphate</name>
        <dbReference type="ChEBI" id="CHEBI:58228"/>
    </ligand>
</feature>
<feature type="binding site" evidence="1">
    <location>
        <position position="145"/>
    </location>
    <ligand>
        <name>carbamoyl phosphate</name>
        <dbReference type="ChEBI" id="CHEBI:58228"/>
    </ligand>
</feature>
<feature type="binding site" evidence="1">
    <location>
        <position position="182"/>
    </location>
    <ligand>
        <name>L-aspartate</name>
        <dbReference type="ChEBI" id="CHEBI:29991"/>
    </ligand>
</feature>
<feature type="binding site" evidence="1">
    <location>
        <position position="248"/>
    </location>
    <ligand>
        <name>L-aspartate</name>
        <dbReference type="ChEBI" id="CHEBI:29991"/>
    </ligand>
</feature>
<feature type="binding site" evidence="1">
    <location>
        <position position="289"/>
    </location>
    <ligand>
        <name>carbamoyl phosphate</name>
        <dbReference type="ChEBI" id="CHEBI:58228"/>
    </ligand>
</feature>
<feature type="binding site" evidence="1">
    <location>
        <position position="290"/>
    </location>
    <ligand>
        <name>carbamoyl phosphate</name>
        <dbReference type="ChEBI" id="CHEBI:58228"/>
    </ligand>
</feature>
<gene>
    <name evidence="1" type="primary">pyrB</name>
    <name type="ordered locus">syc0859_c</name>
</gene>
<proteinExistence type="inferred from homology"/>
<organism>
    <name type="scientific">Synechococcus sp. (strain ATCC 27144 / PCC 6301 / SAUG 1402/1)</name>
    <name type="common">Anacystis nidulans</name>
    <dbReference type="NCBI Taxonomy" id="269084"/>
    <lineage>
        <taxon>Bacteria</taxon>
        <taxon>Bacillati</taxon>
        <taxon>Cyanobacteriota</taxon>
        <taxon>Cyanophyceae</taxon>
        <taxon>Synechococcales</taxon>
        <taxon>Synechococcaceae</taxon>
        <taxon>Synechococcus</taxon>
    </lineage>
</organism>
<protein>
    <recommendedName>
        <fullName evidence="1">Aspartate carbamoyltransferase catalytic subunit</fullName>
        <ecNumber evidence="1">2.1.3.2</ecNumber>
    </recommendedName>
    <alternativeName>
        <fullName evidence="1">Aspartate transcarbamylase</fullName>
        <shortName evidence="1">ATCase</shortName>
    </alternativeName>
</protein>
<name>PYRB_SYNP6</name>
<reference key="1">
    <citation type="journal article" date="2007" name="Photosyn. Res.">
        <title>Complete nucleotide sequence of the freshwater unicellular cyanobacterium Synechococcus elongatus PCC 6301 chromosome: gene content and organization.</title>
        <authorList>
            <person name="Sugita C."/>
            <person name="Ogata K."/>
            <person name="Shikata M."/>
            <person name="Jikuya H."/>
            <person name="Takano J."/>
            <person name="Furumichi M."/>
            <person name="Kanehisa M."/>
            <person name="Omata T."/>
            <person name="Sugiura M."/>
            <person name="Sugita M."/>
        </authorList>
    </citation>
    <scope>NUCLEOTIDE SEQUENCE [LARGE SCALE GENOMIC DNA]</scope>
    <source>
        <strain>ATCC 27144 / PCC 6301 / SAUG 1402/1</strain>
    </source>
</reference>
<evidence type="ECO:0000255" key="1">
    <source>
        <dbReference type="HAMAP-Rule" id="MF_00001"/>
    </source>
</evidence>
<keyword id="KW-0665">Pyrimidine biosynthesis</keyword>
<keyword id="KW-0808">Transferase</keyword>
<sequence>MSDWQRRHILSLADFSPVEYEMVLRTAAGFAEVLQRRNKKVPTLQGQVVTTLFFEPSTRTRSSFELAAKRLSADTINFAASSSSLSKGETILDTARTYLAMGSDIMVVRHAQAGVPQAIAREMERLGTEVRVLNAGDGQHEHPSQALLDLFTICSVIQPEQPSLGAIAGKKIAIVGDILHSRVARSNIWSLTAAGAEVHLAAPPTLLPPEFAQFANTPIPGSGLPRQLQIHWQLESALENADFVMTLRLQQERMSQSLLPSLREYHREFGLTRDRLRVCQPSVKLLHPGPVNRGVELSSDLMEDESISLIQPQVTNGVAVRMALLYLIGAAVPAAIPA</sequence>
<dbReference type="EC" id="2.1.3.2" evidence="1"/>
<dbReference type="EMBL" id="AP008231">
    <property type="protein sequence ID" value="BAD79049.1"/>
    <property type="molecule type" value="Genomic_DNA"/>
</dbReference>
<dbReference type="RefSeq" id="WP_011243171.1">
    <property type="nucleotide sequence ID" value="NZ_CP085785.1"/>
</dbReference>
<dbReference type="SMR" id="Q5N3S1"/>
<dbReference type="KEGG" id="syc:syc0859_c"/>
<dbReference type="eggNOG" id="COG0540">
    <property type="taxonomic scope" value="Bacteria"/>
</dbReference>
<dbReference type="UniPathway" id="UPA00070">
    <property type="reaction ID" value="UER00116"/>
</dbReference>
<dbReference type="Proteomes" id="UP000001175">
    <property type="component" value="Chromosome"/>
</dbReference>
<dbReference type="GO" id="GO:0005829">
    <property type="term" value="C:cytosol"/>
    <property type="evidence" value="ECO:0007669"/>
    <property type="project" value="TreeGrafter"/>
</dbReference>
<dbReference type="GO" id="GO:0016597">
    <property type="term" value="F:amino acid binding"/>
    <property type="evidence" value="ECO:0007669"/>
    <property type="project" value="InterPro"/>
</dbReference>
<dbReference type="GO" id="GO:0004070">
    <property type="term" value="F:aspartate carbamoyltransferase activity"/>
    <property type="evidence" value="ECO:0007669"/>
    <property type="project" value="UniProtKB-UniRule"/>
</dbReference>
<dbReference type="GO" id="GO:0006207">
    <property type="term" value="P:'de novo' pyrimidine nucleobase biosynthetic process"/>
    <property type="evidence" value="ECO:0007669"/>
    <property type="project" value="InterPro"/>
</dbReference>
<dbReference type="GO" id="GO:0044205">
    <property type="term" value="P:'de novo' UMP biosynthetic process"/>
    <property type="evidence" value="ECO:0007669"/>
    <property type="project" value="UniProtKB-UniRule"/>
</dbReference>
<dbReference type="GO" id="GO:0006520">
    <property type="term" value="P:amino acid metabolic process"/>
    <property type="evidence" value="ECO:0007669"/>
    <property type="project" value="InterPro"/>
</dbReference>
<dbReference type="Gene3D" id="3.40.50.1370">
    <property type="entry name" value="Aspartate/ornithine carbamoyltransferase"/>
    <property type="match status" value="2"/>
</dbReference>
<dbReference type="HAMAP" id="MF_00001">
    <property type="entry name" value="Asp_carb_tr"/>
    <property type="match status" value="1"/>
</dbReference>
<dbReference type="InterPro" id="IPR006132">
    <property type="entry name" value="Asp/Orn_carbamoyltranf_P-bd"/>
</dbReference>
<dbReference type="InterPro" id="IPR006130">
    <property type="entry name" value="Asp/Orn_carbamoylTrfase"/>
</dbReference>
<dbReference type="InterPro" id="IPR036901">
    <property type="entry name" value="Asp/Orn_carbamoylTrfase_sf"/>
</dbReference>
<dbReference type="InterPro" id="IPR002082">
    <property type="entry name" value="Asp_carbamoyltransf"/>
</dbReference>
<dbReference type="InterPro" id="IPR006131">
    <property type="entry name" value="Asp_carbamoyltransf_Asp/Orn-bd"/>
</dbReference>
<dbReference type="NCBIfam" id="TIGR00670">
    <property type="entry name" value="asp_carb_tr"/>
    <property type="match status" value="1"/>
</dbReference>
<dbReference type="NCBIfam" id="NF002032">
    <property type="entry name" value="PRK00856.1"/>
    <property type="match status" value="1"/>
</dbReference>
<dbReference type="PANTHER" id="PTHR45753:SF6">
    <property type="entry name" value="ASPARTATE CARBAMOYLTRANSFERASE"/>
    <property type="match status" value="1"/>
</dbReference>
<dbReference type="PANTHER" id="PTHR45753">
    <property type="entry name" value="ORNITHINE CARBAMOYLTRANSFERASE, MITOCHONDRIAL"/>
    <property type="match status" value="1"/>
</dbReference>
<dbReference type="Pfam" id="PF00185">
    <property type="entry name" value="OTCace"/>
    <property type="match status" value="1"/>
</dbReference>
<dbReference type="Pfam" id="PF02729">
    <property type="entry name" value="OTCace_N"/>
    <property type="match status" value="1"/>
</dbReference>
<dbReference type="PRINTS" id="PR00100">
    <property type="entry name" value="AOTCASE"/>
</dbReference>
<dbReference type="PRINTS" id="PR00101">
    <property type="entry name" value="ATCASE"/>
</dbReference>
<dbReference type="SUPFAM" id="SSF53671">
    <property type="entry name" value="Aspartate/ornithine carbamoyltransferase"/>
    <property type="match status" value="1"/>
</dbReference>
<dbReference type="PROSITE" id="PS00097">
    <property type="entry name" value="CARBAMOYLTRANSFERASE"/>
    <property type="match status" value="1"/>
</dbReference>
<comment type="function">
    <text evidence="1">Catalyzes the condensation of carbamoyl phosphate and aspartate to form carbamoyl aspartate and inorganic phosphate, the committed step in the de novo pyrimidine nucleotide biosynthesis pathway.</text>
</comment>
<comment type="catalytic activity">
    <reaction evidence="1">
        <text>carbamoyl phosphate + L-aspartate = N-carbamoyl-L-aspartate + phosphate + H(+)</text>
        <dbReference type="Rhea" id="RHEA:20013"/>
        <dbReference type="ChEBI" id="CHEBI:15378"/>
        <dbReference type="ChEBI" id="CHEBI:29991"/>
        <dbReference type="ChEBI" id="CHEBI:32814"/>
        <dbReference type="ChEBI" id="CHEBI:43474"/>
        <dbReference type="ChEBI" id="CHEBI:58228"/>
        <dbReference type="EC" id="2.1.3.2"/>
    </reaction>
</comment>
<comment type="pathway">
    <text evidence="1">Pyrimidine metabolism; UMP biosynthesis via de novo pathway; (S)-dihydroorotate from bicarbonate: step 2/3.</text>
</comment>
<comment type="subunit">
    <text evidence="1">Heterododecamer (2C3:3R2) of six catalytic PyrB chains organized as two trimers (C3), and six regulatory PyrI chains organized as three dimers (R2).</text>
</comment>
<comment type="similarity">
    <text evidence="1">Belongs to the aspartate/ornithine carbamoyltransferase superfamily. ATCase family.</text>
</comment>
<accession>Q5N3S1</accession>